<dbReference type="EC" id="1.1.1.23" evidence="1"/>
<dbReference type="EMBL" id="AE016795">
    <property type="protein sequence ID" value="AAO11252.1"/>
    <property type="molecule type" value="Genomic_DNA"/>
</dbReference>
<dbReference type="RefSeq" id="WP_011080739.1">
    <property type="nucleotide sequence ID" value="NC_004459.3"/>
</dbReference>
<dbReference type="SMR" id="Q8D8Q0"/>
<dbReference type="KEGG" id="vvu:VV1_2919"/>
<dbReference type="HOGENOM" id="CLU_006732_3_0_6"/>
<dbReference type="UniPathway" id="UPA00031">
    <property type="reaction ID" value="UER00014"/>
</dbReference>
<dbReference type="Proteomes" id="UP000002275">
    <property type="component" value="Chromosome 1"/>
</dbReference>
<dbReference type="GO" id="GO:0005829">
    <property type="term" value="C:cytosol"/>
    <property type="evidence" value="ECO:0007669"/>
    <property type="project" value="TreeGrafter"/>
</dbReference>
<dbReference type="GO" id="GO:0004399">
    <property type="term" value="F:histidinol dehydrogenase activity"/>
    <property type="evidence" value="ECO:0007669"/>
    <property type="project" value="UniProtKB-UniRule"/>
</dbReference>
<dbReference type="GO" id="GO:0051287">
    <property type="term" value="F:NAD binding"/>
    <property type="evidence" value="ECO:0007669"/>
    <property type="project" value="InterPro"/>
</dbReference>
<dbReference type="GO" id="GO:0008270">
    <property type="term" value="F:zinc ion binding"/>
    <property type="evidence" value="ECO:0007669"/>
    <property type="project" value="UniProtKB-UniRule"/>
</dbReference>
<dbReference type="GO" id="GO:0000105">
    <property type="term" value="P:L-histidine biosynthetic process"/>
    <property type="evidence" value="ECO:0007669"/>
    <property type="project" value="UniProtKB-UniRule"/>
</dbReference>
<dbReference type="CDD" id="cd06572">
    <property type="entry name" value="Histidinol_dh"/>
    <property type="match status" value="1"/>
</dbReference>
<dbReference type="FunFam" id="3.40.50.1980:FF:000001">
    <property type="entry name" value="Histidinol dehydrogenase"/>
    <property type="match status" value="1"/>
</dbReference>
<dbReference type="FunFam" id="1.20.5.1300:FF:000002">
    <property type="entry name" value="Histidinol dehydrogenase, chloroplastic"/>
    <property type="match status" value="1"/>
</dbReference>
<dbReference type="FunFam" id="3.40.50.1980:FF:000002">
    <property type="entry name" value="Histidinol dehydrogenase, chloroplastic"/>
    <property type="match status" value="1"/>
</dbReference>
<dbReference type="Gene3D" id="1.20.5.1300">
    <property type="match status" value="1"/>
</dbReference>
<dbReference type="Gene3D" id="3.40.50.1980">
    <property type="entry name" value="Nitrogenase molybdenum iron protein domain"/>
    <property type="match status" value="2"/>
</dbReference>
<dbReference type="HAMAP" id="MF_01024">
    <property type="entry name" value="HisD"/>
    <property type="match status" value="1"/>
</dbReference>
<dbReference type="InterPro" id="IPR016161">
    <property type="entry name" value="Ald_DH/histidinol_DH"/>
</dbReference>
<dbReference type="InterPro" id="IPR001692">
    <property type="entry name" value="Histidinol_DH_CS"/>
</dbReference>
<dbReference type="InterPro" id="IPR022695">
    <property type="entry name" value="Histidinol_DH_monofunct"/>
</dbReference>
<dbReference type="InterPro" id="IPR012131">
    <property type="entry name" value="Hstdl_DH"/>
</dbReference>
<dbReference type="NCBIfam" id="TIGR00069">
    <property type="entry name" value="hisD"/>
    <property type="match status" value="1"/>
</dbReference>
<dbReference type="PANTHER" id="PTHR21256:SF2">
    <property type="entry name" value="HISTIDINE BIOSYNTHESIS TRIFUNCTIONAL PROTEIN"/>
    <property type="match status" value="1"/>
</dbReference>
<dbReference type="PANTHER" id="PTHR21256">
    <property type="entry name" value="HISTIDINOL DEHYDROGENASE HDH"/>
    <property type="match status" value="1"/>
</dbReference>
<dbReference type="Pfam" id="PF00815">
    <property type="entry name" value="Histidinol_dh"/>
    <property type="match status" value="1"/>
</dbReference>
<dbReference type="PIRSF" id="PIRSF000099">
    <property type="entry name" value="Histidinol_dh"/>
    <property type="match status" value="1"/>
</dbReference>
<dbReference type="PRINTS" id="PR00083">
    <property type="entry name" value="HOLDHDRGNASE"/>
</dbReference>
<dbReference type="SUPFAM" id="SSF53720">
    <property type="entry name" value="ALDH-like"/>
    <property type="match status" value="1"/>
</dbReference>
<dbReference type="PROSITE" id="PS00611">
    <property type="entry name" value="HISOL_DEHYDROGENASE"/>
    <property type="match status" value="1"/>
</dbReference>
<protein>
    <recommendedName>
        <fullName evidence="1">Histidinol dehydrogenase</fullName>
        <shortName evidence="1">HDH</shortName>
        <ecNumber evidence="1">1.1.1.23</ecNumber>
    </recommendedName>
</protein>
<organism>
    <name type="scientific">Vibrio vulnificus (strain CMCP6)</name>
    <dbReference type="NCBI Taxonomy" id="216895"/>
    <lineage>
        <taxon>Bacteria</taxon>
        <taxon>Pseudomonadati</taxon>
        <taxon>Pseudomonadota</taxon>
        <taxon>Gammaproteobacteria</taxon>
        <taxon>Vibrionales</taxon>
        <taxon>Vibrionaceae</taxon>
        <taxon>Vibrio</taxon>
    </lineage>
</organism>
<reference key="1">
    <citation type="submission" date="2002-12" db="EMBL/GenBank/DDBJ databases">
        <title>Complete genome sequence of Vibrio vulnificus CMCP6.</title>
        <authorList>
            <person name="Rhee J.H."/>
            <person name="Kim S.Y."/>
            <person name="Chung S.S."/>
            <person name="Kim J.J."/>
            <person name="Moon Y.H."/>
            <person name="Jeong H."/>
            <person name="Choy H.E."/>
        </authorList>
    </citation>
    <scope>NUCLEOTIDE SEQUENCE [LARGE SCALE GENOMIC DNA]</scope>
    <source>
        <strain>CMCP6</strain>
    </source>
</reference>
<proteinExistence type="inferred from homology"/>
<comment type="function">
    <text evidence="1">Catalyzes the sequential NAD-dependent oxidations of L-histidinol to L-histidinaldehyde and then to L-histidine.</text>
</comment>
<comment type="catalytic activity">
    <reaction evidence="1">
        <text>L-histidinol + 2 NAD(+) + H2O = L-histidine + 2 NADH + 3 H(+)</text>
        <dbReference type="Rhea" id="RHEA:20641"/>
        <dbReference type="ChEBI" id="CHEBI:15377"/>
        <dbReference type="ChEBI" id="CHEBI:15378"/>
        <dbReference type="ChEBI" id="CHEBI:57540"/>
        <dbReference type="ChEBI" id="CHEBI:57595"/>
        <dbReference type="ChEBI" id="CHEBI:57699"/>
        <dbReference type="ChEBI" id="CHEBI:57945"/>
        <dbReference type="EC" id="1.1.1.23"/>
    </reaction>
</comment>
<comment type="cofactor">
    <cofactor evidence="1">
        <name>Zn(2+)</name>
        <dbReference type="ChEBI" id="CHEBI:29105"/>
    </cofactor>
    <text evidence="1">Binds 1 zinc ion per subunit.</text>
</comment>
<comment type="pathway">
    <text evidence="1">Amino-acid biosynthesis; L-histidine biosynthesis; L-histidine from 5-phospho-alpha-D-ribose 1-diphosphate: step 9/9.</text>
</comment>
<comment type="similarity">
    <text evidence="1">Belongs to the histidinol dehydrogenase family.</text>
</comment>
<evidence type="ECO:0000255" key="1">
    <source>
        <dbReference type="HAMAP-Rule" id="MF_01024"/>
    </source>
</evidence>
<name>HISX_VIBVU</name>
<gene>
    <name evidence="1" type="primary">hisD</name>
    <name type="ordered locus">VV1_2919</name>
</gene>
<accession>Q8D8Q0</accession>
<sequence length="431" mass="46039">MRTVVWQSLSETQQDAILERPAITEGANITAAVAEVIAKVRAEGDAALFELTEKFDRVKPESIRVTEQEIEEASARLTAKMKQALEQAYANIAKFHNAQKPTPIKVETQPGVVCEQVTRPIQKVGLYIPGGSAPLPSTVLMLGVPAQIAGCRKVVLCSPPPIADEILYVAKLCNIDEVYNVGGGQAVAAMAYGTESVTKVDKIFGPGNAYVTEAKRQVSNDFRGAAIDMPAGPSEVLVIADETADADFIAADLLSQAEHGPDSQVVLVTPSVLIADQVTDAVQKQLKQLSRASIAEKALASSLIIIADSLTQAVSISNYYGPEHLIVQTKNPRELLPLLDNAGSIFLGDWSPESAGDYASGTNHVLPTYGYTRTYSSLGLADFSKRMTIQELSAEGLKTLAPTVVTMAEAEGLDAHKRAVTIRVEKLNARG</sequence>
<feature type="chain" id="PRO_0000135877" description="Histidinol dehydrogenase">
    <location>
        <begin position="1"/>
        <end position="431"/>
    </location>
</feature>
<feature type="active site" description="Proton acceptor" evidence="1">
    <location>
        <position position="323"/>
    </location>
</feature>
<feature type="active site" description="Proton acceptor" evidence="1">
    <location>
        <position position="324"/>
    </location>
</feature>
<feature type="binding site" evidence="1">
    <location>
        <position position="127"/>
    </location>
    <ligand>
        <name>NAD(+)</name>
        <dbReference type="ChEBI" id="CHEBI:57540"/>
    </ligand>
</feature>
<feature type="binding site" evidence="1">
    <location>
        <position position="185"/>
    </location>
    <ligand>
        <name>NAD(+)</name>
        <dbReference type="ChEBI" id="CHEBI:57540"/>
    </ligand>
</feature>
<feature type="binding site" evidence="1">
    <location>
        <position position="208"/>
    </location>
    <ligand>
        <name>NAD(+)</name>
        <dbReference type="ChEBI" id="CHEBI:57540"/>
    </ligand>
</feature>
<feature type="binding site" evidence="1">
    <location>
        <position position="234"/>
    </location>
    <ligand>
        <name>substrate</name>
    </ligand>
</feature>
<feature type="binding site" evidence="1">
    <location>
        <position position="256"/>
    </location>
    <ligand>
        <name>substrate</name>
    </ligand>
</feature>
<feature type="binding site" evidence="1">
    <location>
        <position position="256"/>
    </location>
    <ligand>
        <name>Zn(2+)</name>
        <dbReference type="ChEBI" id="CHEBI:29105"/>
    </ligand>
</feature>
<feature type="binding site" evidence="1">
    <location>
        <position position="259"/>
    </location>
    <ligand>
        <name>substrate</name>
    </ligand>
</feature>
<feature type="binding site" evidence="1">
    <location>
        <position position="259"/>
    </location>
    <ligand>
        <name>Zn(2+)</name>
        <dbReference type="ChEBI" id="CHEBI:29105"/>
    </ligand>
</feature>
<feature type="binding site" evidence="1">
    <location>
        <position position="324"/>
    </location>
    <ligand>
        <name>substrate</name>
    </ligand>
</feature>
<feature type="binding site" evidence="1">
    <location>
        <position position="357"/>
    </location>
    <ligand>
        <name>substrate</name>
    </ligand>
</feature>
<feature type="binding site" evidence="1">
    <location>
        <position position="357"/>
    </location>
    <ligand>
        <name>Zn(2+)</name>
        <dbReference type="ChEBI" id="CHEBI:29105"/>
    </ligand>
</feature>
<feature type="binding site" evidence="1">
    <location>
        <position position="411"/>
    </location>
    <ligand>
        <name>substrate</name>
    </ligand>
</feature>
<feature type="binding site" evidence="1">
    <location>
        <position position="416"/>
    </location>
    <ligand>
        <name>substrate</name>
    </ligand>
</feature>
<feature type="binding site" evidence="1">
    <location>
        <position position="416"/>
    </location>
    <ligand>
        <name>Zn(2+)</name>
        <dbReference type="ChEBI" id="CHEBI:29105"/>
    </ligand>
</feature>
<keyword id="KW-0028">Amino-acid biosynthesis</keyword>
<keyword id="KW-0368">Histidine biosynthesis</keyword>
<keyword id="KW-0479">Metal-binding</keyword>
<keyword id="KW-0520">NAD</keyword>
<keyword id="KW-0560">Oxidoreductase</keyword>
<keyword id="KW-0862">Zinc</keyword>